<protein>
    <recommendedName>
        <fullName>Probable E3 ubiquitin ligase complex SCF subunit sconB</fullName>
    </recommendedName>
    <alternativeName>
        <fullName>Sulfur controller B</fullName>
    </alternativeName>
    <alternativeName>
        <fullName>Sulfur metabolite repression control protein B</fullName>
    </alternativeName>
</protein>
<accession>B6GZA1</accession>
<feature type="chain" id="PRO_0000397254" description="Probable E3 ubiquitin ligase complex SCF subunit sconB">
    <location>
        <begin position="1"/>
        <end position="673"/>
    </location>
</feature>
<feature type="domain" description="F-box" evidence="2">
    <location>
        <begin position="165"/>
        <end position="211"/>
    </location>
</feature>
<feature type="repeat" description="WD 1">
    <location>
        <begin position="341"/>
        <end position="378"/>
    </location>
</feature>
<feature type="repeat" description="WD 2">
    <location>
        <begin position="381"/>
        <end position="420"/>
    </location>
</feature>
<feature type="repeat" description="WD 3">
    <location>
        <begin position="422"/>
        <end position="458"/>
    </location>
</feature>
<feature type="repeat" description="WD 4">
    <location>
        <begin position="460"/>
        <end position="500"/>
    </location>
</feature>
<feature type="repeat" description="WD 5">
    <location>
        <begin position="554"/>
        <end position="599"/>
    </location>
</feature>
<feature type="repeat" description="WD 6">
    <location>
        <begin position="602"/>
        <end position="639"/>
    </location>
</feature>
<feature type="repeat" description="WD 7">
    <location>
        <begin position="642"/>
        <end position="673"/>
    </location>
</feature>
<feature type="region of interest" description="Disordered" evidence="3">
    <location>
        <begin position="1"/>
        <end position="39"/>
    </location>
</feature>
<dbReference type="EMBL" id="AM920427">
    <property type="protein sequence ID" value="CAP80912.1"/>
    <property type="molecule type" value="Genomic_DNA"/>
</dbReference>
<dbReference type="RefSeq" id="XP_002558093.1">
    <property type="nucleotide sequence ID" value="XM_002558047.1"/>
</dbReference>
<dbReference type="SMR" id="B6GZA1"/>
<dbReference type="STRING" id="500485.B6GZA1"/>
<dbReference type="GeneID" id="8317408"/>
<dbReference type="KEGG" id="pcs:N7525_001311"/>
<dbReference type="VEuPathDB" id="FungiDB:PCH_Pc12g12850"/>
<dbReference type="eggNOG" id="KOG0274">
    <property type="taxonomic scope" value="Eukaryota"/>
</dbReference>
<dbReference type="HOGENOM" id="CLU_000288_103_1_1"/>
<dbReference type="OMA" id="GIAHVWS"/>
<dbReference type="OrthoDB" id="5580488at2759"/>
<dbReference type="BioCyc" id="PCHR:PC12G12850-MONOMER"/>
<dbReference type="UniPathway" id="UPA00143"/>
<dbReference type="Proteomes" id="UP000000724">
    <property type="component" value="Contig Pc00c12"/>
</dbReference>
<dbReference type="GO" id="GO:0016567">
    <property type="term" value="P:protein ubiquitination"/>
    <property type="evidence" value="ECO:0007669"/>
    <property type="project" value="UniProtKB-UniPathway"/>
</dbReference>
<dbReference type="CDD" id="cd22147">
    <property type="entry name" value="F-box_SpPof1-like"/>
    <property type="match status" value="1"/>
</dbReference>
<dbReference type="CDD" id="cd00200">
    <property type="entry name" value="WD40"/>
    <property type="match status" value="1"/>
</dbReference>
<dbReference type="FunFam" id="1.20.1280.50:FF:000016">
    <property type="entry name" value="E3 ubiquitin ligase complex SCF subunit sconB"/>
    <property type="match status" value="1"/>
</dbReference>
<dbReference type="FunFam" id="2.130.10.10:FF:000715">
    <property type="entry name" value="F-box protein MET30"/>
    <property type="match status" value="1"/>
</dbReference>
<dbReference type="Gene3D" id="1.20.1280.50">
    <property type="match status" value="1"/>
</dbReference>
<dbReference type="Gene3D" id="2.130.10.10">
    <property type="entry name" value="YVTN repeat-like/Quinoprotein amine dehydrogenase"/>
    <property type="match status" value="3"/>
</dbReference>
<dbReference type="InterPro" id="IPR036047">
    <property type="entry name" value="F-box-like_dom_sf"/>
</dbReference>
<dbReference type="InterPro" id="IPR001810">
    <property type="entry name" value="F-box_dom"/>
</dbReference>
<dbReference type="InterPro" id="IPR020472">
    <property type="entry name" value="G-protein_beta_WD-40_rep"/>
</dbReference>
<dbReference type="InterPro" id="IPR051075">
    <property type="entry name" value="SCF_subunit_WD-repeat"/>
</dbReference>
<dbReference type="InterPro" id="IPR015943">
    <property type="entry name" value="WD40/YVTN_repeat-like_dom_sf"/>
</dbReference>
<dbReference type="InterPro" id="IPR019775">
    <property type="entry name" value="WD40_repeat_CS"/>
</dbReference>
<dbReference type="InterPro" id="IPR036322">
    <property type="entry name" value="WD40_repeat_dom_sf"/>
</dbReference>
<dbReference type="InterPro" id="IPR001680">
    <property type="entry name" value="WD40_rpt"/>
</dbReference>
<dbReference type="PANTHER" id="PTHR19872">
    <property type="entry name" value="UBIQUITIN LIGASE SPECIFICITY FACTOR/HREP PROTEIN"/>
    <property type="match status" value="1"/>
</dbReference>
<dbReference type="PANTHER" id="PTHR19872:SF9">
    <property type="entry name" value="UBIQUITIN-BINDING SDF UBIQUITIN LIGASE COMPLEX SUBUNIT"/>
    <property type="match status" value="1"/>
</dbReference>
<dbReference type="Pfam" id="PF12937">
    <property type="entry name" value="F-box-like"/>
    <property type="match status" value="1"/>
</dbReference>
<dbReference type="Pfam" id="PF00400">
    <property type="entry name" value="WD40"/>
    <property type="match status" value="6"/>
</dbReference>
<dbReference type="PRINTS" id="PR00320">
    <property type="entry name" value="GPROTEINBRPT"/>
</dbReference>
<dbReference type="SMART" id="SM00256">
    <property type="entry name" value="FBOX"/>
    <property type="match status" value="1"/>
</dbReference>
<dbReference type="SMART" id="SM00320">
    <property type="entry name" value="WD40"/>
    <property type="match status" value="7"/>
</dbReference>
<dbReference type="SUPFAM" id="SSF81383">
    <property type="entry name" value="F-box domain"/>
    <property type="match status" value="1"/>
</dbReference>
<dbReference type="SUPFAM" id="SSF50978">
    <property type="entry name" value="WD40 repeat-like"/>
    <property type="match status" value="1"/>
</dbReference>
<dbReference type="PROSITE" id="PS50181">
    <property type="entry name" value="FBOX"/>
    <property type="match status" value="1"/>
</dbReference>
<dbReference type="PROSITE" id="PS00678">
    <property type="entry name" value="WD_REPEATS_1"/>
    <property type="match status" value="4"/>
</dbReference>
<dbReference type="PROSITE" id="PS50082">
    <property type="entry name" value="WD_REPEATS_2"/>
    <property type="match status" value="7"/>
</dbReference>
<dbReference type="PROSITE" id="PS50294">
    <property type="entry name" value="WD_REPEATS_REGION"/>
    <property type="match status" value="1"/>
</dbReference>
<name>SCONB_PENRW</name>
<proteinExistence type="inferred from homology"/>
<gene>
    <name type="primary">sconB</name>
    <name type="ORF">Pc12g12850</name>
</gene>
<comment type="function">
    <text evidence="1">Component of the SCF(sconB) E3 ubiquitin ligase complex involved in the regulation of sulfur metabolite repression, probably by mediating the inactivation or degradation of the metR transcription factor.</text>
</comment>
<comment type="pathway">
    <text>Protein modification; protein ubiquitination.</text>
</comment>
<comment type="subunit">
    <text evidence="1">Component of the SCF(sconB) E3 ubiquitin ligase complex.</text>
</comment>
<comment type="similarity">
    <text evidence="4">Belongs to the WD repeat MET30/SCONB/SCON-2 family.</text>
</comment>
<evidence type="ECO:0000250" key="1"/>
<evidence type="ECO:0000255" key="2">
    <source>
        <dbReference type="PROSITE-ProRule" id="PRU00080"/>
    </source>
</evidence>
<evidence type="ECO:0000256" key="3">
    <source>
        <dbReference type="SAM" id="MobiDB-lite"/>
    </source>
</evidence>
<evidence type="ECO:0000305" key="4"/>
<organism>
    <name type="scientific">Penicillium rubens (strain ATCC 28089 / DSM 1075 / NRRL 1951 / Wisconsin 54-1255)</name>
    <name type="common">Penicillium chrysogenum</name>
    <dbReference type="NCBI Taxonomy" id="500485"/>
    <lineage>
        <taxon>Eukaryota</taxon>
        <taxon>Fungi</taxon>
        <taxon>Dikarya</taxon>
        <taxon>Ascomycota</taxon>
        <taxon>Pezizomycotina</taxon>
        <taxon>Eurotiomycetes</taxon>
        <taxon>Eurotiomycetidae</taxon>
        <taxon>Eurotiales</taxon>
        <taxon>Aspergillaceae</taxon>
        <taxon>Penicillium</taxon>
        <taxon>Penicillium chrysogenum species complex</taxon>
    </lineage>
</organism>
<reference key="1">
    <citation type="journal article" date="2008" name="Nat. Biotechnol.">
        <title>Genome sequencing and analysis of the filamentous fungus Penicillium chrysogenum.</title>
        <authorList>
            <person name="van den Berg M.A."/>
            <person name="Albang R."/>
            <person name="Albermann K."/>
            <person name="Badger J.H."/>
            <person name="Daran J.-M."/>
            <person name="Driessen A.J.M."/>
            <person name="Garcia-Estrada C."/>
            <person name="Fedorova N.D."/>
            <person name="Harris D.M."/>
            <person name="Heijne W.H.M."/>
            <person name="Joardar V.S."/>
            <person name="Kiel J.A.K.W."/>
            <person name="Kovalchuk A."/>
            <person name="Martin J.F."/>
            <person name="Nierman W.C."/>
            <person name="Nijland J.G."/>
            <person name="Pronk J.T."/>
            <person name="Roubos J.A."/>
            <person name="van der Klei I.J."/>
            <person name="van Peij N.N.M.E."/>
            <person name="Veenhuis M."/>
            <person name="von Doehren H."/>
            <person name="Wagner C."/>
            <person name="Wortman J.R."/>
            <person name="Bovenberg R.A.L."/>
        </authorList>
    </citation>
    <scope>NUCLEOTIDE SEQUENCE [LARGE SCALE GENOMIC DNA]</scope>
    <source>
        <strain>ATCC 28089 / DSM 1075 / NRRL 1951 / Wisconsin 54-1255</strain>
    </source>
</reference>
<keyword id="KW-1185">Reference proteome</keyword>
<keyword id="KW-0677">Repeat</keyword>
<keyword id="KW-0804">Transcription</keyword>
<keyword id="KW-0805">Transcription regulation</keyword>
<keyword id="KW-0833">Ubl conjugation pathway</keyword>
<keyword id="KW-0853">WD repeat</keyword>
<sequence>MADRPEPSSTQQSLVVPDAGVSANADSNRSLPRKDTDNTTQTLEELARQNVAPFLAKYQPRQYAPLRSQVSAPSERHMVNAGYCYRHQPDSKCSRRQADEQSMTQLQSELNLLPQSDQQGIAHVWSLFSAAPAKQRTLMLQGILAQSCFPQLSYISASVRELIRIDFLAALPPELSFKILRYLDTASLCRAAQVSPRWRALADDDVVWHRMCEQHIRRKCNKCGWGLPLLDRKRLREAKREIELRATNWGNNKPAVGSSEAAMVESCSTVQPPASGKRTLESDEEAAALAKRHCASSPQSPEVDESYFKTRYRPWKEVYRDRFVVGMNWKHKRCSIKVFKGHRDSVMCLQFEDNILMTGSYDATVKIWDTDTGEELRTLKGHVAGVRCLQFDDTKLITGSLDRSIRVWNWRTGECISKYNGHAEAVIALHFDCTLLASASVDRTVKIWNFKDKSTFVLPHPQGVNAVKIDSVSRTVLTACDDGAARLWDLDTKTCIRVFHNHIGAVQQVIALPREIELENHLADCENDHVGTSSQGGDNILSTLSPLLEATSPSHPNSPFGSSFDQDQDRIESPRYILTSGVDTTIRLWETSTGRCLRTFFGHLEGIWALSADTLRIASGGMDRMVKIWDPRIPTGQDTYEGHSAAVNCIGLSDSRFITGGDDYQVRMYDFRA</sequence>